<feature type="chain" id="PRO_0000191197" description="Chaperone protein ClpB">
    <location>
        <begin position="1"/>
        <end position="878"/>
    </location>
</feature>
<feature type="domain" description="Clp R" evidence="2">
    <location>
        <begin position="3"/>
        <end position="146"/>
    </location>
</feature>
<feature type="region of interest" description="Repeat 1" evidence="2">
    <location>
        <begin position="6"/>
        <end position="71"/>
    </location>
</feature>
<feature type="region of interest" description="Repeat 2" evidence="2">
    <location>
        <begin position="83"/>
        <end position="146"/>
    </location>
</feature>
<feature type="region of interest" description="NBD1" evidence="1">
    <location>
        <begin position="159"/>
        <end position="340"/>
    </location>
</feature>
<feature type="region of interest" description="Linker" evidence="1">
    <location>
        <begin position="341"/>
        <end position="549"/>
    </location>
</feature>
<feature type="region of interest" description="NBD2" evidence="1">
    <location>
        <begin position="559"/>
        <end position="783"/>
    </location>
</feature>
<feature type="region of interest" description="C-terminal" evidence="1">
    <location>
        <begin position="784"/>
        <end position="878"/>
    </location>
</feature>
<feature type="coiled-coil region" evidence="1">
    <location>
        <begin position="391"/>
        <end position="525"/>
    </location>
</feature>
<feature type="binding site" evidence="1">
    <location>
        <begin position="206"/>
        <end position="213"/>
    </location>
    <ligand>
        <name>ATP</name>
        <dbReference type="ChEBI" id="CHEBI:30616"/>
        <label>1</label>
    </ligand>
</feature>
<feature type="binding site" evidence="1">
    <location>
        <begin position="609"/>
        <end position="616"/>
    </location>
    <ligand>
        <name>ATP</name>
        <dbReference type="ChEBI" id="CHEBI:30616"/>
        <label>2</label>
    </ligand>
</feature>
<evidence type="ECO:0000250" key="1"/>
<evidence type="ECO:0000255" key="2">
    <source>
        <dbReference type="PROSITE-ProRule" id="PRU01251"/>
    </source>
</evidence>
<evidence type="ECO:0000305" key="3"/>
<keyword id="KW-0067">ATP-binding</keyword>
<keyword id="KW-0143">Chaperone</keyword>
<keyword id="KW-0175">Coiled coil</keyword>
<keyword id="KW-0963">Cytoplasm</keyword>
<keyword id="KW-0547">Nucleotide-binding</keyword>
<keyword id="KW-1185">Reference proteome</keyword>
<keyword id="KW-0677">Repeat</keyword>
<keyword id="KW-0346">Stress response</keyword>
<gene>
    <name type="primary">clpB</name>
    <name type="ordered locus">TP_0071</name>
</gene>
<proteinExistence type="inferred from homology"/>
<accession>O83110</accession>
<name>CLPB_TREPA</name>
<comment type="function">
    <text evidence="1">Part of a stress-induced multi-chaperone system, it is involved in the recovery of the cell from heat-induced damage, in cooperation with DnaK, DnaJ and GrpE. Acts before DnaK, in the processing of protein aggregates. Protein binding stimulates the ATPase activity; ATP hydrolysis unfolds the denatured protein aggregates, which probably helps expose new hydrophobic binding sites on the surface of ClpB-bound aggregates, contributing to the solubilization and refolding of denatured protein aggregates by DnaK (By similarity).</text>
</comment>
<comment type="subunit">
    <text evidence="1">Homohexamer. The oligomerization is ATP-dependent (By similarity).</text>
</comment>
<comment type="subcellular location">
    <subcellularLocation>
        <location evidence="3">Cytoplasm</location>
    </subcellularLocation>
</comment>
<comment type="domain">
    <text evidence="1">The Clp repeat (R) domain probably functions as a substrate-discriminating domain, recruiting aggregated proteins to the ClpB hexamer and/or stabilizing bound proteins. The NBD2 domain is responsible for oligomerization, whereas the NBD1 domain stabilizes the hexamer probably in an ATP-dependent manner. The movement of the coiled-coil domain is essential for ClpB ability to rescue proteins from an aggregated state, probably by pulling apart large aggregated proteins, which are bound between the coiled-coils motifs of adjacent ClpB subunits in the functional hexamer (By similarity).</text>
</comment>
<comment type="similarity">
    <text evidence="3">Belongs to the ClpA/ClpB family.</text>
</comment>
<organism>
    <name type="scientific">Treponema pallidum (strain Nichols)</name>
    <dbReference type="NCBI Taxonomy" id="243276"/>
    <lineage>
        <taxon>Bacteria</taxon>
        <taxon>Pseudomonadati</taxon>
        <taxon>Spirochaetota</taxon>
        <taxon>Spirochaetia</taxon>
        <taxon>Spirochaetales</taxon>
        <taxon>Treponemataceae</taxon>
        <taxon>Treponema</taxon>
    </lineage>
</organism>
<sequence length="878" mass="98981">MNTDRYTVKASEALNDAISLAEAENHGQVEEEHLLHALLSQKDGIISPLIEKIGAKPDFLYDELLQCLRRKPRVTGPAAQTRCAPTLSKACARAERLALKNQDEYVSCEHLLLAISETDSNTARLLHSQGITSKTISAALKDIRGSKRVTSQDPESTFQCLEKYCRDLTTLAREEKIDPVIGRDEEIRRVMQVLSRRTKNNPVLIGEPGVGKTAIVEGLARRIVSGDVPESLKGKRLLSLDLGALVAGAKFRGEFEERLKAVIEAVQKSDGGVILFIDELHTLVGAGASEGSMDASNLLKPALARGELRSIGATTLNEYRKYIEKDAALERRFQQVYCVQPTVEDTIAILRGLQEKYEVHHGVRIKDEALVAATVLSDRYITNRFLPDKAIDLVDEAASRLKMEIESQPVELDQVERKILQLNIEKASLLKESDPASKERLEKLEKELAGFLERRAAMQVQWQNEKGRIEESRRYKEELERLRIEETMFSREGDLNKAAELRYGKIPELEKKIMLLTAEVEKKSGLEGQLLREEVCEEDIAKIISMWTGIPVSKMMASEQQKYLQLESVLMQRVVGQDEAVRVISDAIRRNKAGLSDTRRPLGSFLCVGPTGVGKTELARTLADFLFNDERALTRIDMSEYMEKHAISRLIGAPPGYVGYDEGGQLTEAVRRRPYSVLLFDEVEKAHQDVFNIFLQILDDGRLTDGQGRVVDFRNTIIIMTSNIGSEHILSARESRTHTSDLPVPETQSTEEQTLPEQIRGLLHTYFRPEFLNRIDEVLIFKRLTRKHIRLITDIQLQMVVERLESRHIKLRVRDAAKAYLAERGYDDTFGARPLKRAIQTELENALAREILSGRFRGGSTIVVDMCKDALCFTEQTS</sequence>
<protein>
    <recommendedName>
        <fullName>Chaperone protein ClpB</fullName>
    </recommendedName>
</protein>
<reference key="1">
    <citation type="journal article" date="1998" name="Science">
        <title>Complete genome sequence of Treponema pallidum, the syphilis spirochete.</title>
        <authorList>
            <person name="Fraser C.M."/>
            <person name="Norris S.J."/>
            <person name="Weinstock G.M."/>
            <person name="White O."/>
            <person name="Sutton G.G."/>
            <person name="Dodson R.J."/>
            <person name="Gwinn M.L."/>
            <person name="Hickey E.K."/>
            <person name="Clayton R.A."/>
            <person name="Ketchum K.A."/>
            <person name="Sodergren E."/>
            <person name="Hardham J.M."/>
            <person name="McLeod M.P."/>
            <person name="Salzberg S.L."/>
            <person name="Peterson J.D."/>
            <person name="Khalak H.G."/>
            <person name="Richardson D.L."/>
            <person name="Howell J.K."/>
            <person name="Chidambaram M."/>
            <person name="Utterback T.R."/>
            <person name="McDonald L.A."/>
            <person name="Artiach P."/>
            <person name="Bowman C."/>
            <person name="Cotton M.D."/>
            <person name="Fujii C."/>
            <person name="Garland S.A."/>
            <person name="Hatch B."/>
            <person name="Horst K."/>
            <person name="Roberts K.M."/>
            <person name="Sandusky M."/>
            <person name="Weidman J.F."/>
            <person name="Smith H.O."/>
            <person name="Venter J.C."/>
        </authorList>
    </citation>
    <scope>NUCLEOTIDE SEQUENCE [LARGE SCALE GENOMIC DNA]</scope>
    <source>
        <strain>Nichols</strain>
    </source>
</reference>
<dbReference type="EMBL" id="AE000520">
    <property type="protein sequence ID" value="AAC65062.1"/>
    <property type="molecule type" value="Genomic_DNA"/>
</dbReference>
<dbReference type="PIR" id="G71371">
    <property type="entry name" value="G71371"/>
</dbReference>
<dbReference type="RefSeq" id="WP_010881520.1">
    <property type="nucleotide sequence ID" value="NC_021490.2"/>
</dbReference>
<dbReference type="SMR" id="O83110"/>
<dbReference type="IntAct" id="O83110">
    <property type="interactions" value="5"/>
</dbReference>
<dbReference type="STRING" id="243276.TP_0071"/>
<dbReference type="EnsemblBacteria" id="AAC65062">
    <property type="protein sequence ID" value="AAC65062"/>
    <property type="gene ID" value="TP_0071"/>
</dbReference>
<dbReference type="GeneID" id="93875866"/>
<dbReference type="KEGG" id="tpa:TP_0071"/>
<dbReference type="KEGG" id="tpw:TPANIC_0071"/>
<dbReference type="eggNOG" id="COG0542">
    <property type="taxonomic scope" value="Bacteria"/>
</dbReference>
<dbReference type="HOGENOM" id="CLU_005070_4_0_12"/>
<dbReference type="OrthoDB" id="9803641at2"/>
<dbReference type="Proteomes" id="UP000000811">
    <property type="component" value="Chromosome"/>
</dbReference>
<dbReference type="GO" id="GO:0005737">
    <property type="term" value="C:cytoplasm"/>
    <property type="evidence" value="ECO:0007669"/>
    <property type="project" value="UniProtKB-SubCell"/>
</dbReference>
<dbReference type="GO" id="GO:0005524">
    <property type="term" value="F:ATP binding"/>
    <property type="evidence" value="ECO:0007669"/>
    <property type="project" value="UniProtKB-KW"/>
</dbReference>
<dbReference type="GO" id="GO:0016887">
    <property type="term" value="F:ATP hydrolysis activity"/>
    <property type="evidence" value="ECO:0007669"/>
    <property type="project" value="InterPro"/>
</dbReference>
<dbReference type="GO" id="GO:0034605">
    <property type="term" value="P:cellular response to heat"/>
    <property type="evidence" value="ECO:0007669"/>
    <property type="project" value="TreeGrafter"/>
</dbReference>
<dbReference type="GO" id="GO:0042026">
    <property type="term" value="P:protein refolding"/>
    <property type="evidence" value="ECO:0007669"/>
    <property type="project" value="InterPro"/>
</dbReference>
<dbReference type="CDD" id="cd00009">
    <property type="entry name" value="AAA"/>
    <property type="match status" value="1"/>
</dbReference>
<dbReference type="CDD" id="cd19499">
    <property type="entry name" value="RecA-like_ClpB_Hsp104-like"/>
    <property type="match status" value="1"/>
</dbReference>
<dbReference type="FunFam" id="1.10.8.60:FF:000017">
    <property type="entry name" value="ATP-dependent chaperone ClpB"/>
    <property type="match status" value="1"/>
</dbReference>
<dbReference type="FunFam" id="3.40.50.300:FF:000120">
    <property type="entry name" value="ATP-dependent chaperone ClpB"/>
    <property type="match status" value="1"/>
</dbReference>
<dbReference type="FunFam" id="3.40.50.300:FF:000025">
    <property type="entry name" value="ATP-dependent Clp protease subunit"/>
    <property type="match status" value="1"/>
</dbReference>
<dbReference type="FunFam" id="3.40.50.300:FF:000010">
    <property type="entry name" value="Chaperone clpB 1, putative"/>
    <property type="match status" value="1"/>
</dbReference>
<dbReference type="Gene3D" id="1.10.8.60">
    <property type="match status" value="1"/>
</dbReference>
<dbReference type="Gene3D" id="1.10.1780.10">
    <property type="entry name" value="Clp, N-terminal domain"/>
    <property type="match status" value="1"/>
</dbReference>
<dbReference type="Gene3D" id="3.40.50.300">
    <property type="entry name" value="P-loop containing nucleotide triphosphate hydrolases"/>
    <property type="match status" value="3"/>
</dbReference>
<dbReference type="InterPro" id="IPR003593">
    <property type="entry name" value="AAA+_ATPase"/>
</dbReference>
<dbReference type="InterPro" id="IPR003959">
    <property type="entry name" value="ATPase_AAA_core"/>
</dbReference>
<dbReference type="InterPro" id="IPR017730">
    <property type="entry name" value="Chaperonin_ClpB"/>
</dbReference>
<dbReference type="InterPro" id="IPR019489">
    <property type="entry name" value="Clp_ATPase_C"/>
</dbReference>
<dbReference type="InterPro" id="IPR036628">
    <property type="entry name" value="Clp_N_dom_sf"/>
</dbReference>
<dbReference type="InterPro" id="IPR004176">
    <property type="entry name" value="Clp_R_dom"/>
</dbReference>
<dbReference type="InterPro" id="IPR001270">
    <property type="entry name" value="ClpA/B"/>
</dbReference>
<dbReference type="InterPro" id="IPR018368">
    <property type="entry name" value="ClpA/B_CS1"/>
</dbReference>
<dbReference type="InterPro" id="IPR028299">
    <property type="entry name" value="ClpA/B_CS2"/>
</dbReference>
<dbReference type="InterPro" id="IPR041546">
    <property type="entry name" value="ClpA/ClpB_AAA_lid"/>
</dbReference>
<dbReference type="InterPro" id="IPR050130">
    <property type="entry name" value="ClpA_ClpB"/>
</dbReference>
<dbReference type="InterPro" id="IPR027417">
    <property type="entry name" value="P-loop_NTPase"/>
</dbReference>
<dbReference type="NCBIfam" id="TIGR03346">
    <property type="entry name" value="chaperone_ClpB"/>
    <property type="match status" value="1"/>
</dbReference>
<dbReference type="PANTHER" id="PTHR11638">
    <property type="entry name" value="ATP-DEPENDENT CLP PROTEASE"/>
    <property type="match status" value="1"/>
</dbReference>
<dbReference type="PANTHER" id="PTHR11638:SF18">
    <property type="entry name" value="HEAT SHOCK PROTEIN 104"/>
    <property type="match status" value="1"/>
</dbReference>
<dbReference type="Pfam" id="PF00004">
    <property type="entry name" value="AAA"/>
    <property type="match status" value="1"/>
</dbReference>
<dbReference type="Pfam" id="PF07724">
    <property type="entry name" value="AAA_2"/>
    <property type="match status" value="1"/>
</dbReference>
<dbReference type="Pfam" id="PF17871">
    <property type="entry name" value="AAA_lid_9"/>
    <property type="match status" value="1"/>
</dbReference>
<dbReference type="Pfam" id="PF02861">
    <property type="entry name" value="Clp_N"/>
    <property type="match status" value="2"/>
</dbReference>
<dbReference type="Pfam" id="PF10431">
    <property type="entry name" value="ClpB_D2-small"/>
    <property type="match status" value="1"/>
</dbReference>
<dbReference type="PRINTS" id="PR00300">
    <property type="entry name" value="CLPPROTEASEA"/>
</dbReference>
<dbReference type="SMART" id="SM00382">
    <property type="entry name" value="AAA"/>
    <property type="match status" value="2"/>
</dbReference>
<dbReference type="SMART" id="SM01086">
    <property type="entry name" value="ClpB_D2-small"/>
    <property type="match status" value="1"/>
</dbReference>
<dbReference type="SUPFAM" id="SSF81923">
    <property type="entry name" value="Double Clp-N motif"/>
    <property type="match status" value="1"/>
</dbReference>
<dbReference type="SUPFAM" id="SSF52540">
    <property type="entry name" value="P-loop containing nucleoside triphosphate hydrolases"/>
    <property type="match status" value="2"/>
</dbReference>
<dbReference type="PROSITE" id="PS51903">
    <property type="entry name" value="CLP_R"/>
    <property type="match status" value="1"/>
</dbReference>
<dbReference type="PROSITE" id="PS00870">
    <property type="entry name" value="CLPAB_1"/>
    <property type="match status" value="1"/>
</dbReference>
<dbReference type="PROSITE" id="PS00871">
    <property type="entry name" value="CLPAB_2"/>
    <property type="match status" value="1"/>
</dbReference>